<feature type="chain" id="PRO_1000001813" description="Phosphate acyltransferase">
    <location>
        <begin position="1"/>
        <end position="349"/>
    </location>
</feature>
<organism>
    <name type="scientific">Rhodopseudomonas palustris (strain BisA53)</name>
    <dbReference type="NCBI Taxonomy" id="316055"/>
    <lineage>
        <taxon>Bacteria</taxon>
        <taxon>Pseudomonadati</taxon>
        <taxon>Pseudomonadota</taxon>
        <taxon>Alphaproteobacteria</taxon>
        <taxon>Hyphomicrobiales</taxon>
        <taxon>Nitrobacteraceae</taxon>
        <taxon>Rhodopseudomonas</taxon>
    </lineage>
</organism>
<accession>Q07MS2</accession>
<gene>
    <name evidence="1" type="primary">plsX</name>
    <name type="ordered locus">RPE_2825</name>
</gene>
<keyword id="KW-0963">Cytoplasm</keyword>
<keyword id="KW-0444">Lipid biosynthesis</keyword>
<keyword id="KW-0443">Lipid metabolism</keyword>
<keyword id="KW-0594">Phospholipid biosynthesis</keyword>
<keyword id="KW-1208">Phospholipid metabolism</keyword>
<keyword id="KW-0808">Transferase</keyword>
<evidence type="ECO:0000255" key="1">
    <source>
        <dbReference type="HAMAP-Rule" id="MF_00019"/>
    </source>
</evidence>
<reference key="1">
    <citation type="submission" date="2006-09" db="EMBL/GenBank/DDBJ databases">
        <title>Complete sequence of Rhodopseudomonas palustris BisA53.</title>
        <authorList>
            <consortium name="US DOE Joint Genome Institute"/>
            <person name="Copeland A."/>
            <person name="Lucas S."/>
            <person name="Lapidus A."/>
            <person name="Barry K."/>
            <person name="Detter J.C."/>
            <person name="Glavina del Rio T."/>
            <person name="Hammon N."/>
            <person name="Israni S."/>
            <person name="Dalin E."/>
            <person name="Tice H."/>
            <person name="Pitluck S."/>
            <person name="Chain P."/>
            <person name="Malfatti S."/>
            <person name="Shin M."/>
            <person name="Vergez L."/>
            <person name="Schmutz J."/>
            <person name="Larimer F."/>
            <person name="Land M."/>
            <person name="Hauser L."/>
            <person name="Pelletier D.A."/>
            <person name="Kyrpides N."/>
            <person name="Kim E."/>
            <person name="Harwood C.S."/>
            <person name="Oda Y."/>
            <person name="Richardson P."/>
        </authorList>
    </citation>
    <scope>NUCLEOTIDE SEQUENCE [LARGE SCALE GENOMIC DNA]</scope>
    <source>
        <strain>BisA53</strain>
    </source>
</reference>
<sequence length="349" mass="36496">MSNKVRIALDAMGGDFGASVVVPGAAISLTRHPDSEFLLFGDSALIKKELEAHPALKAVSQVIHTDVAVSMHDKPSQALRRGRKVSSMWLALEAVKNGKADVAVSAGNTGALMAMARFCLRMLPGIDRPAIAAIWPTVRGDSIVLDLGASIGGDEHHLKALAVMGAATASVLFDLERPTVGLLNIGVEEIKGGEEIRAAADLIRAMAQPPFDFIGFVEADGIGKGAADVIVTEGFSGNIALKAAEGTARQIGEYLRAAMSSTLMSKIGYLFARGAFRALREKMDPNKSNGGVFLGLNGVVVKSHGGTNADGFAYAVDVGYDMVRNDLLTKINQSLHRNGAEAHGVAPAA</sequence>
<proteinExistence type="inferred from homology"/>
<protein>
    <recommendedName>
        <fullName evidence="1">Phosphate acyltransferase</fullName>
        <ecNumber evidence="1">2.3.1.274</ecNumber>
    </recommendedName>
    <alternativeName>
        <fullName evidence="1">Acyl-ACP phosphotransacylase</fullName>
    </alternativeName>
    <alternativeName>
        <fullName evidence="1">Acyl-[acyl-carrier-protein]--phosphate acyltransferase</fullName>
    </alternativeName>
    <alternativeName>
        <fullName evidence="1">Phosphate-acyl-ACP acyltransferase</fullName>
    </alternativeName>
</protein>
<name>PLSX_RHOP5</name>
<comment type="function">
    <text evidence="1">Catalyzes the reversible formation of acyl-phosphate (acyl-PO(4)) from acyl-[acyl-carrier-protein] (acyl-ACP). This enzyme utilizes acyl-ACP as fatty acyl donor, but not acyl-CoA.</text>
</comment>
<comment type="catalytic activity">
    <reaction evidence="1">
        <text>a fatty acyl-[ACP] + phosphate = an acyl phosphate + holo-[ACP]</text>
        <dbReference type="Rhea" id="RHEA:42292"/>
        <dbReference type="Rhea" id="RHEA-COMP:9685"/>
        <dbReference type="Rhea" id="RHEA-COMP:14125"/>
        <dbReference type="ChEBI" id="CHEBI:43474"/>
        <dbReference type="ChEBI" id="CHEBI:59918"/>
        <dbReference type="ChEBI" id="CHEBI:64479"/>
        <dbReference type="ChEBI" id="CHEBI:138651"/>
        <dbReference type="EC" id="2.3.1.274"/>
    </reaction>
</comment>
<comment type="pathway">
    <text evidence="1">Lipid metabolism; phospholipid metabolism.</text>
</comment>
<comment type="subunit">
    <text evidence="1">Homodimer. Probably interacts with PlsY.</text>
</comment>
<comment type="subcellular location">
    <subcellularLocation>
        <location evidence="1">Cytoplasm</location>
    </subcellularLocation>
    <text evidence="1">Associated with the membrane possibly through PlsY.</text>
</comment>
<comment type="similarity">
    <text evidence="1">Belongs to the PlsX family.</text>
</comment>
<dbReference type="EC" id="2.3.1.274" evidence="1"/>
<dbReference type="EMBL" id="CP000463">
    <property type="protein sequence ID" value="ABJ06762.1"/>
    <property type="molecule type" value="Genomic_DNA"/>
</dbReference>
<dbReference type="SMR" id="Q07MS2"/>
<dbReference type="STRING" id="316055.RPE_2825"/>
<dbReference type="KEGG" id="rpe:RPE_2825"/>
<dbReference type="eggNOG" id="COG0416">
    <property type="taxonomic scope" value="Bacteria"/>
</dbReference>
<dbReference type="HOGENOM" id="CLU_039379_1_0_5"/>
<dbReference type="OrthoDB" id="9806408at2"/>
<dbReference type="UniPathway" id="UPA00085"/>
<dbReference type="GO" id="GO:0005737">
    <property type="term" value="C:cytoplasm"/>
    <property type="evidence" value="ECO:0007669"/>
    <property type="project" value="UniProtKB-SubCell"/>
</dbReference>
<dbReference type="GO" id="GO:0043811">
    <property type="term" value="F:phosphate:acyl-[acyl carrier protein] acyltransferase activity"/>
    <property type="evidence" value="ECO:0007669"/>
    <property type="project" value="UniProtKB-UniRule"/>
</dbReference>
<dbReference type="GO" id="GO:0006633">
    <property type="term" value="P:fatty acid biosynthetic process"/>
    <property type="evidence" value="ECO:0007669"/>
    <property type="project" value="UniProtKB-UniRule"/>
</dbReference>
<dbReference type="GO" id="GO:0008654">
    <property type="term" value="P:phospholipid biosynthetic process"/>
    <property type="evidence" value="ECO:0007669"/>
    <property type="project" value="UniProtKB-KW"/>
</dbReference>
<dbReference type="Gene3D" id="3.40.718.10">
    <property type="entry name" value="Isopropylmalate Dehydrogenase"/>
    <property type="match status" value="1"/>
</dbReference>
<dbReference type="HAMAP" id="MF_00019">
    <property type="entry name" value="PlsX"/>
    <property type="match status" value="1"/>
</dbReference>
<dbReference type="InterPro" id="IPR003664">
    <property type="entry name" value="FA_synthesis"/>
</dbReference>
<dbReference type="InterPro" id="IPR012281">
    <property type="entry name" value="Phospholipid_synth_PlsX-like"/>
</dbReference>
<dbReference type="NCBIfam" id="TIGR00182">
    <property type="entry name" value="plsX"/>
    <property type="match status" value="1"/>
</dbReference>
<dbReference type="PANTHER" id="PTHR30100">
    <property type="entry name" value="FATTY ACID/PHOSPHOLIPID SYNTHESIS PROTEIN PLSX"/>
    <property type="match status" value="1"/>
</dbReference>
<dbReference type="PANTHER" id="PTHR30100:SF1">
    <property type="entry name" value="PHOSPHATE ACYLTRANSFERASE"/>
    <property type="match status" value="1"/>
</dbReference>
<dbReference type="Pfam" id="PF02504">
    <property type="entry name" value="FA_synthesis"/>
    <property type="match status" value="1"/>
</dbReference>
<dbReference type="PIRSF" id="PIRSF002465">
    <property type="entry name" value="Phsphlp_syn_PlsX"/>
    <property type="match status" value="1"/>
</dbReference>
<dbReference type="SUPFAM" id="SSF53659">
    <property type="entry name" value="Isocitrate/Isopropylmalate dehydrogenase-like"/>
    <property type="match status" value="1"/>
</dbReference>